<feature type="chain" id="PRO_0000340186" description="Sulfate adenylyltransferase subunit 2">
    <location>
        <begin position="1"/>
        <end position="300"/>
    </location>
</feature>
<feature type="region of interest" description="Disordered" evidence="2">
    <location>
        <begin position="281"/>
        <end position="300"/>
    </location>
</feature>
<name>CYSD_BRUO2</name>
<reference key="1">
    <citation type="journal article" date="2009" name="PLoS ONE">
        <title>Genome degradation in Brucella ovis corresponds with narrowing of its host range and tissue tropism.</title>
        <authorList>
            <person name="Tsolis R.M."/>
            <person name="Seshadri R."/>
            <person name="Santos R.L."/>
            <person name="Sangari F.J."/>
            <person name="Lobo J.M."/>
            <person name="de Jong M.F."/>
            <person name="Ren Q."/>
            <person name="Myers G."/>
            <person name="Brinkac L.M."/>
            <person name="Nelson W.C."/>
            <person name="Deboy R.T."/>
            <person name="Angiuoli S."/>
            <person name="Khouri H."/>
            <person name="Dimitrov G."/>
            <person name="Robinson J.R."/>
            <person name="Mulligan S."/>
            <person name="Walker R.L."/>
            <person name="Elzer P.E."/>
            <person name="Hassan K.A."/>
            <person name="Paulsen I.T."/>
        </authorList>
    </citation>
    <scope>NUCLEOTIDE SEQUENCE [LARGE SCALE GENOMIC DNA]</scope>
    <source>
        <strain>ATCC 25840 / 63/290 / NCTC 10512</strain>
    </source>
</reference>
<accession>A5VNC5</accession>
<gene>
    <name evidence="1" type="primary">cysD</name>
    <name type="ordered locus">BOV_0185</name>
</gene>
<protein>
    <recommendedName>
        <fullName evidence="1">Sulfate adenylyltransferase subunit 2</fullName>
        <ecNumber evidence="1">2.7.7.4</ecNumber>
    </recommendedName>
    <alternativeName>
        <fullName evidence="1">ATP-sulfurylase small subunit</fullName>
    </alternativeName>
    <alternativeName>
        <fullName evidence="1">Sulfate adenylate transferase</fullName>
        <shortName evidence="1">SAT</shortName>
    </alternativeName>
</protein>
<dbReference type="EC" id="2.7.7.4" evidence="1"/>
<dbReference type="EMBL" id="CP000708">
    <property type="protein sequence ID" value="ABQ61288.1"/>
    <property type="molecule type" value="Genomic_DNA"/>
</dbReference>
<dbReference type="SMR" id="A5VNC5"/>
<dbReference type="KEGG" id="bov:BOV_0185"/>
<dbReference type="HOGENOM" id="CLU_043026_0_0_5"/>
<dbReference type="UniPathway" id="UPA00140">
    <property type="reaction ID" value="UER00204"/>
</dbReference>
<dbReference type="Proteomes" id="UP000006383">
    <property type="component" value="Chromosome I"/>
</dbReference>
<dbReference type="GO" id="GO:0005524">
    <property type="term" value="F:ATP binding"/>
    <property type="evidence" value="ECO:0007669"/>
    <property type="project" value="UniProtKB-KW"/>
</dbReference>
<dbReference type="GO" id="GO:0004781">
    <property type="term" value="F:sulfate adenylyltransferase (ATP) activity"/>
    <property type="evidence" value="ECO:0007669"/>
    <property type="project" value="UniProtKB-UniRule"/>
</dbReference>
<dbReference type="GO" id="GO:0070814">
    <property type="term" value="P:hydrogen sulfide biosynthetic process"/>
    <property type="evidence" value="ECO:0007669"/>
    <property type="project" value="UniProtKB-UniRule"/>
</dbReference>
<dbReference type="GO" id="GO:0000103">
    <property type="term" value="P:sulfate assimilation"/>
    <property type="evidence" value="ECO:0007669"/>
    <property type="project" value="UniProtKB-UniRule"/>
</dbReference>
<dbReference type="CDD" id="cd23946">
    <property type="entry name" value="Sulfate_adenylyltransferase_2"/>
    <property type="match status" value="1"/>
</dbReference>
<dbReference type="FunFam" id="3.40.50.620:FF:000002">
    <property type="entry name" value="Sulfate adenylyltransferase subunit 2"/>
    <property type="match status" value="1"/>
</dbReference>
<dbReference type="Gene3D" id="3.40.50.620">
    <property type="entry name" value="HUPs"/>
    <property type="match status" value="1"/>
</dbReference>
<dbReference type="HAMAP" id="MF_00064">
    <property type="entry name" value="Sulf_adenylyltr_sub2"/>
    <property type="match status" value="1"/>
</dbReference>
<dbReference type="InterPro" id="IPR002500">
    <property type="entry name" value="PAPS_reduct_dom"/>
</dbReference>
<dbReference type="InterPro" id="IPR014729">
    <property type="entry name" value="Rossmann-like_a/b/a_fold"/>
</dbReference>
<dbReference type="InterPro" id="IPR011784">
    <property type="entry name" value="SO4_adenylTrfase_ssu"/>
</dbReference>
<dbReference type="InterPro" id="IPR050128">
    <property type="entry name" value="Sulfate_adenylyltrnsfr_sub2"/>
</dbReference>
<dbReference type="NCBIfam" id="TIGR02039">
    <property type="entry name" value="CysD"/>
    <property type="match status" value="1"/>
</dbReference>
<dbReference type="NCBIfam" id="NF003587">
    <property type="entry name" value="PRK05253.1"/>
    <property type="match status" value="1"/>
</dbReference>
<dbReference type="NCBIfam" id="NF009214">
    <property type="entry name" value="PRK12563.1"/>
    <property type="match status" value="1"/>
</dbReference>
<dbReference type="PANTHER" id="PTHR43196">
    <property type="entry name" value="SULFATE ADENYLYLTRANSFERASE SUBUNIT 2"/>
    <property type="match status" value="1"/>
</dbReference>
<dbReference type="PANTHER" id="PTHR43196:SF1">
    <property type="entry name" value="SULFATE ADENYLYLTRANSFERASE SUBUNIT 2"/>
    <property type="match status" value="1"/>
</dbReference>
<dbReference type="Pfam" id="PF01507">
    <property type="entry name" value="PAPS_reduct"/>
    <property type="match status" value="1"/>
</dbReference>
<dbReference type="PIRSF" id="PIRSF002936">
    <property type="entry name" value="CysDAde_trans"/>
    <property type="match status" value="1"/>
</dbReference>
<dbReference type="SUPFAM" id="SSF52402">
    <property type="entry name" value="Adenine nucleotide alpha hydrolases-like"/>
    <property type="match status" value="1"/>
</dbReference>
<evidence type="ECO:0000255" key="1">
    <source>
        <dbReference type="HAMAP-Rule" id="MF_00064"/>
    </source>
</evidence>
<evidence type="ECO:0000256" key="2">
    <source>
        <dbReference type="SAM" id="MobiDB-lite"/>
    </source>
</evidence>
<organism>
    <name type="scientific">Brucella ovis (strain ATCC 25840 / 63/290 / NCTC 10512)</name>
    <dbReference type="NCBI Taxonomy" id="444178"/>
    <lineage>
        <taxon>Bacteria</taxon>
        <taxon>Pseudomonadati</taxon>
        <taxon>Pseudomonadota</taxon>
        <taxon>Alphaproteobacteria</taxon>
        <taxon>Hyphomicrobiales</taxon>
        <taxon>Brucellaceae</taxon>
        <taxon>Brucella/Ochrobactrum group</taxon>
        <taxon>Brucella</taxon>
    </lineage>
</organism>
<comment type="function">
    <text evidence="1">With CysN forms the ATP sulfurylase (ATPS) that catalyzes the adenylation of sulfate producing adenosine 5'-phosphosulfate (APS) and diphosphate, the first enzymatic step in sulfur assimilation pathway. APS synthesis involves the formation of a high-energy phosphoric-sulfuric acid anhydride bond driven by GTP hydrolysis by CysN coupled to ATP hydrolysis by CysD.</text>
</comment>
<comment type="catalytic activity">
    <reaction evidence="1">
        <text>sulfate + ATP + H(+) = adenosine 5'-phosphosulfate + diphosphate</text>
        <dbReference type="Rhea" id="RHEA:18133"/>
        <dbReference type="ChEBI" id="CHEBI:15378"/>
        <dbReference type="ChEBI" id="CHEBI:16189"/>
        <dbReference type="ChEBI" id="CHEBI:30616"/>
        <dbReference type="ChEBI" id="CHEBI:33019"/>
        <dbReference type="ChEBI" id="CHEBI:58243"/>
        <dbReference type="EC" id="2.7.7.4"/>
    </reaction>
</comment>
<comment type="pathway">
    <text evidence="1">Sulfur metabolism; hydrogen sulfide biosynthesis; sulfite from sulfate: step 1/3.</text>
</comment>
<comment type="subunit">
    <text evidence="1">Heterodimer composed of CysD, the smaller subunit, and CysN.</text>
</comment>
<comment type="similarity">
    <text evidence="1">Belongs to the PAPS reductase family. CysD subfamily.</text>
</comment>
<proteinExistence type="inferred from homology"/>
<keyword id="KW-0067">ATP-binding</keyword>
<keyword id="KW-0547">Nucleotide-binding</keyword>
<keyword id="KW-0548">Nucleotidyltransferase</keyword>
<keyword id="KW-0808">Transferase</keyword>
<sequence>MKNLTHLQRLEAEAIHVFREVAATFSNPVMLYSVGKDSSVMLHLAMKAFYPAPPPFPFLHVDTTWKFREMIEFRDAQAREKGFELLVHVNEQGVRDGIGPFTHGSNVHTHIMKTVGLRQALDKYRFDAAFGGARRDEEKSRAKERIFSFRNAQHGWDPKNQRPEMWKIYNTRVSKGESIRVFPLSNWTELDIWQYILQENIPIVPLYFAARRPVVERDGMLIMVDDDRMKLRPGEQVENRLVRFRTLGCYPLTGAIPSSAANLSDIVEEMLIARTSERQGRAIDRDEAGSMEKKKREGYF</sequence>